<accession>Q6AK48</accession>
<name>BIOB_DESPS</name>
<sequence length="336" mass="36564">MYRGLFLISEAVISRIEKKVLSGGKILFAEACDLALHCARADLDRLLALARQVGSLHHGKSIDLCSIVNARSGRCSEDCKFCAQSSHYSTGVDSYALVDPDYVLALAKQNEAYGVSRFSLVTAGRAVSPAFLREVASIYRRLGEETSLAPCASMGLLEPETAEMLVEMGVRRYHCNLETSASFFSEVCTSHTWQDKVATIEHARRAGLEVCSGGIIGLGESMEQRIELAFELRDLEVLSIPLNILNPIANTPFADLPALTEREILITFALFRLINPRAIVRTAGGRNLLAGQQKKLFLAGANGAIVGDYLTTSGDGLKKDIDMFLNLGFSIGSREK</sequence>
<keyword id="KW-0001">2Fe-2S</keyword>
<keyword id="KW-0004">4Fe-4S</keyword>
<keyword id="KW-0093">Biotin biosynthesis</keyword>
<keyword id="KW-0408">Iron</keyword>
<keyword id="KW-0411">Iron-sulfur</keyword>
<keyword id="KW-0479">Metal-binding</keyword>
<keyword id="KW-1185">Reference proteome</keyword>
<keyword id="KW-0949">S-adenosyl-L-methionine</keyword>
<keyword id="KW-0808">Transferase</keyword>
<gene>
    <name evidence="1" type="primary">bioB</name>
    <name type="ordered locus">DP2549</name>
</gene>
<dbReference type="EC" id="2.8.1.6" evidence="1"/>
<dbReference type="EMBL" id="CR522870">
    <property type="protein sequence ID" value="CAG37278.1"/>
    <property type="molecule type" value="Genomic_DNA"/>
</dbReference>
<dbReference type="SMR" id="Q6AK48"/>
<dbReference type="STRING" id="177439.DP2549"/>
<dbReference type="KEGG" id="dps:DP2549"/>
<dbReference type="eggNOG" id="COG0502">
    <property type="taxonomic scope" value="Bacteria"/>
</dbReference>
<dbReference type="HOGENOM" id="CLU_033172_2_1_7"/>
<dbReference type="OrthoDB" id="9786826at2"/>
<dbReference type="UniPathway" id="UPA00078">
    <property type="reaction ID" value="UER00162"/>
</dbReference>
<dbReference type="Proteomes" id="UP000000602">
    <property type="component" value="Chromosome"/>
</dbReference>
<dbReference type="GO" id="GO:0051537">
    <property type="term" value="F:2 iron, 2 sulfur cluster binding"/>
    <property type="evidence" value="ECO:0007669"/>
    <property type="project" value="UniProtKB-KW"/>
</dbReference>
<dbReference type="GO" id="GO:0051539">
    <property type="term" value="F:4 iron, 4 sulfur cluster binding"/>
    <property type="evidence" value="ECO:0007669"/>
    <property type="project" value="UniProtKB-KW"/>
</dbReference>
<dbReference type="GO" id="GO:0004076">
    <property type="term" value="F:biotin synthase activity"/>
    <property type="evidence" value="ECO:0007669"/>
    <property type="project" value="UniProtKB-UniRule"/>
</dbReference>
<dbReference type="GO" id="GO:0005506">
    <property type="term" value="F:iron ion binding"/>
    <property type="evidence" value="ECO:0007669"/>
    <property type="project" value="UniProtKB-UniRule"/>
</dbReference>
<dbReference type="GO" id="GO:0009102">
    <property type="term" value="P:biotin biosynthetic process"/>
    <property type="evidence" value="ECO:0007669"/>
    <property type="project" value="UniProtKB-UniRule"/>
</dbReference>
<dbReference type="CDD" id="cd01335">
    <property type="entry name" value="Radical_SAM"/>
    <property type="match status" value="1"/>
</dbReference>
<dbReference type="Gene3D" id="3.20.20.70">
    <property type="entry name" value="Aldolase class I"/>
    <property type="match status" value="1"/>
</dbReference>
<dbReference type="HAMAP" id="MF_01694">
    <property type="entry name" value="BioB"/>
    <property type="match status" value="1"/>
</dbReference>
<dbReference type="InterPro" id="IPR013785">
    <property type="entry name" value="Aldolase_TIM"/>
</dbReference>
<dbReference type="InterPro" id="IPR010722">
    <property type="entry name" value="BATS_dom"/>
</dbReference>
<dbReference type="InterPro" id="IPR002684">
    <property type="entry name" value="Biotin_synth/BioAB"/>
</dbReference>
<dbReference type="InterPro" id="IPR024177">
    <property type="entry name" value="Biotin_synthase"/>
</dbReference>
<dbReference type="InterPro" id="IPR006638">
    <property type="entry name" value="Elp3/MiaA/NifB-like_rSAM"/>
</dbReference>
<dbReference type="InterPro" id="IPR007197">
    <property type="entry name" value="rSAM"/>
</dbReference>
<dbReference type="NCBIfam" id="TIGR00433">
    <property type="entry name" value="bioB"/>
    <property type="match status" value="1"/>
</dbReference>
<dbReference type="PANTHER" id="PTHR22976">
    <property type="entry name" value="BIOTIN SYNTHASE"/>
    <property type="match status" value="1"/>
</dbReference>
<dbReference type="PANTHER" id="PTHR22976:SF2">
    <property type="entry name" value="BIOTIN SYNTHASE, MITOCHONDRIAL"/>
    <property type="match status" value="1"/>
</dbReference>
<dbReference type="Pfam" id="PF06968">
    <property type="entry name" value="BATS"/>
    <property type="match status" value="1"/>
</dbReference>
<dbReference type="Pfam" id="PF04055">
    <property type="entry name" value="Radical_SAM"/>
    <property type="match status" value="1"/>
</dbReference>
<dbReference type="PIRSF" id="PIRSF001619">
    <property type="entry name" value="Biotin_synth"/>
    <property type="match status" value="1"/>
</dbReference>
<dbReference type="SFLD" id="SFLDG01060">
    <property type="entry name" value="BATS_domain_containing"/>
    <property type="match status" value="1"/>
</dbReference>
<dbReference type="SFLD" id="SFLDG01278">
    <property type="entry name" value="biotin_synthase_like"/>
    <property type="match status" value="1"/>
</dbReference>
<dbReference type="SMART" id="SM00876">
    <property type="entry name" value="BATS"/>
    <property type="match status" value="1"/>
</dbReference>
<dbReference type="SMART" id="SM00729">
    <property type="entry name" value="Elp3"/>
    <property type="match status" value="1"/>
</dbReference>
<dbReference type="SUPFAM" id="SSF102114">
    <property type="entry name" value="Radical SAM enzymes"/>
    <property type="match status" value="1"/>
</dbReference>
<dbReference type="PROSITE" id="PS51918">
    <property type="entry name" value="RADICAL_SAM"/>
    <property type="match status" value="1"/>
</dbReference>
<comment type="function">
    <text evidence="1">Catalyzes the conversion of dethiobiotin (DTB) to biotin by the insertion of a sulfur atom into dethiobiotin via a radical-based mechanism.</text>
</comment>
<comment type="catalytic activity">
    <reaction evidence="1">
        <text>(4R,5S)-dethiobiotin + (sulfur carrier)-SH + 2 reduced [2Fe-2S]-[ferredoxin] + 2 S-adenosyl-L-methionine = (sulfur carrier)-H + biotin + 2 5'-deoxyadenosine + 2 L-methionine + 2 oxidized [2Fe-2S]-[ferredoxin]</text>
        <dbReference type="Rhea" id="RHEA:22060"/>
        <dbReference type="Rhea" id="RHEA-COMP:10000"/>
        <dbReference type="Rhea" id="RHEA-COMP:10001"/>
        <dbReference type="Rhea" id="RHEA-COMP:14737"/>
        <dbReference type="Rhea" id="RHEA-COMP:14739"/>
        <dbReference type="ChEBI" id="CHEBI:17319"/>
        <dbReference type="ChEBI" id="CHEBI:29917"/>
        <dbReference type="ChEBI" id="CHEBI:33737"/>
        <dbReference type="ChEBI" id="CHEBI:33738"/>
        <dbReference type="ChEBI" id="CHEBI:57586"/>
        <dbReference type="ChEBI" id="CHEBI:57844"/>
        <dbReference type="ChEBI" id="CHEBI:59789"/>
        <dbReference type="ChEBI" id="CHEBI:64428"/>
        <dbReference type="ChEBI" id="CHEBI:149473"/>
        <dbReference type="EC" id="2.8.1.6"/>
    </reaction>
</comment>
<comment type="cofactor">
    <cofactor evidence="1">
        <name>[4Fe-4S] cluster</name>
        <dbReference type="ChEBI" id="CHEBI:49883"/>
    </cofactor>
    <text evidence="1">Binds 1 [4Fe-4S] cluster. The cluster is coordinated with 3 cysteines and an exchangeable S-adenosyl-L-methionine.</text>
</comment>
<comment type="cofactor">
    <cofactor evidence="1">
        <name>[2Fe-2S] cluster</name>
        <dbReference type="ChEBI" id="CHEBI:190135"/>
    </cofactor>
    <text evidence="1">Binds 1 [2Fe-2S] cluster. The cluster is coordinated with 3 cysteines and 1 arginine.</text>
</comment>
<comment type="pathway">
    <text evidence="1">Cofactor biosynthesis; biotin biosynthesis; biotin from 7,8-diaminononanoate: step 2/2.</text>
</comment>
<comment type="subunit">
    <text evidence="1">Homodimer.</text>
</comment>
<comment type="similarity">
    <text evidence="1">Belongs to the radical SAM superfamily. Biotin synthase family.</text>
</comment>
<reference key="1">
    <citation type="journal article" date="2004" name="Environ. Microbiol.">
        <title>The genome of Desulfotalea psychrophila, a sulfate-reducing bacterium from permanently cold Arctic sediments.</title>
        <authorList>
            <person name="Rabus R."/>
            <person name="Ruepp A."/>
            <person name="Frickey T."/>
            <person name="Rattei T."/>
            <person name="Fartmann B."/>
            <person name="Stark M."/>
            <person name="Bauer M."/>
            <person name="Zibat A."/>
            <person name="Lombardot T."/>
            <person name="Becker I."/>
            <person name="Amann J."/>
            <person name="Gellner K."/>
            <person name="Teeling H."/>
            <person name="Leuschner W.D."/>
            <person name="Gloeckner F.-O."/>
            <person name="Lupas A.N."/>
            <person name="Amann R."/>
            <person name="Klenk H.-P."/>
        </authorList>
    </citation>
    <scope>NUCLEOTIDE SEQUENCE [LARGE SCALE GENOMIC DNA]</scope>
    <source>
        <strain>DSM 12343 / LSv54</strain>
    </source>
</reference>
<evidence type="ECO:0000255" key="1">
    <source>
        <dbReference type="HAMAP-Rule" id="MF_01694"/>
    </source>
</evidence>
<evidence type="ECO:0000255" key="2">
    <source>
        <dbReference type="PROSITE-ProRule" id="PRU01266"/>
    </source>
</evidence>
<proteinExistence type="inferred from homology"/>
<feature type="chain" id="PRO_0000381349" description="Biotin synthase">
    <location>
        <begin position="1"/>
        <end position="336"/>
    </location>
</feature>
<feature type="domain" description="Radical SAM core" evidence="2">
    <location>
        <begin position="57"/>
        <end position="286"/>
    </location>
</feature>
<feature type="binding site" evidence="1">
    <location>
        <position position="75"/>
    </location>
    <ligand>
        <name>[4Fe-4S] cluster</name>
        <dbReference type="ChEBI" id="CHEBI:49883"/>
        <note>4Fe-4S-S-AdoMet</note>
    </ligand>
</feature>
<feature type="binding site" evidence="1">
    <location>
        <position position="79"/>
    </location>
    <ligand>
        <name>[4Fe-4S] cluster</name>
        <dbReference type="ChEBI" id="CHEBI:49883"/>
        <note>4Fe-4S-S-AdoMet</note>
    </ligand>
</feature>
<feature type="binding site" evidence="1">
    <location>
        <position position="82"/>
    </location>
    <ligand>
        <name>[4Fe-4S] cluster</name>
        <dbReference type="ChEBI" id="CHEBI:49883"/>
        <note>4Fe-4S-S-AdoMet</note>
    </ligand>
</feature>
<feature type="binding site" evidence="1">
    <location>
        <position position="119"/>
    </location>
    <ligand>
        <name>[2Fe-2S] cluster</name>
        <dbReference type="ChEBI" id="CHEBI:190135"/>
    </ligand>
</feature>
<feature type="binding site" evidence="1">
    <location>
        <position position="151"/>
    </location>
    <ligand>
        <name>[2Fe-2S] cluster</name>
        <dbReference type="ChEBI" id="CHEBI:190135"/>
    </ligand>
</feature>
<feature type="binding site" evidence="1">
    <location>
        <position position="211"/>
    </location>
    <ligand>
        <name>[2Fe-2S] cluster</name>
        <dbReference type="ChEBI" id="CHEBI:190135"/>
    </ligand>
</feature>
<feature type="binding site" evidence="1">
    <location>
        <position position="281"/>
    </location>
    <ligand>
        <name>[2Fe-2S] cluster</name>
        <dbReference type="ChEBI" id="CHEBI:190135"/>
    </ligand>
</feature>
<protein>
    <recommendedName>
        <fullName evidence="1">Biotin synthase</fullName>
        <ecNumber evidence="1">2.8.1.6</ecNumber>
    </recommendedName>
</protein>
<organism>
    <name type="scientific">Desulfotalea psychrophila (strain LSv54 / DSM 12343)</name>
    <dbReference type="NCBI Taxonomy" id="177439"/>
    <lineage>
        <taxon>Bacteria</taxon>
        <taxon>Pseudomonadati</taxon>
        <taxon>Thermodesulfobacteriota</taxon>
        <taxon>Desulfobulbia</taxon>
        <taxon>Desulfobulbales</taxon>
        <taxon>Desulfocapsaceae</taxon>
        <taxon>Desulfotalea</taxon>
    </lineage>
</organism>